<comment type="function">
    <text evidence="1">ATP-dependent specificity component of the Clp protease. It directs the protease to specific substrates. Can perform chaperone functions in the absence of ClpP.</text>
</comment>
<comment type="subunit">
    <text evidence="1">Component of the ClpX-ClpP complex. Forms a hexameric ring that, in the presence of ATP, binds to fourteen ClpP subunits assembled into a disk-like structure with a central cavity, resembling the structure of eukaryotic proteasomes.</text>
</comment>
<comment type="similarity">
    <text evidence="1">Belongs to the ClpX chaperone family.</text>
</comment>
<sequence length="422" mass="46376">MSKSSSGDSKNTLYCSFCGKSQHEVRKLIAGPTVFICDECVELCMDIIREENKTTLVKSRDGVPTPRDIHAVLDDYVIGQHHAKRVLSVAVHNHYKRLAHGTKHNDVELAKSNILLVGPTGCGKTLLAQTLARIIDVPFTMADATTLTEAGYVREDVENIILKLLQAARLQRRAAQRGIVYIDEVDKISRKSDNPSITRDVSGEGVQQALLKIMEGTVASVPPQGGRKHPQQEFLQVDTSNILFICGGAFAGLDKIIAQRGKGTSIGFGADVRGPDERSTGDILREVEPEDLLKFGLIPEFIGRLPVVATLSDLDETALVEILTKPKNALVKQYQRLFEMEDVRLEFSDDALRTISHKAIQRKTGARGLRSIMESILLDPMFDLPGLSGVESILVNKEVVEGRAKPLYVHAERRGEQQAPGA</sequence>
<organism>
    <name type="scientific">Azospirillum brasilense</name>
    <dbReference type="NCBI Taxonomy" id="192"/>
    <lineage>
        <taxon>Bacteria</taxon>
        <taxon>Pseudomonadati</taxon>
        <taxon>Pseudomonadota</taxon>
        <taxon>Alphaproteobacteria</taxon>
        <taxon>Rhodospirillales</taxon>
        <taxon>Azospirillaceae</taxon>
        <taxon>Azospirillum</taxon>
    </lineage>
</organism>
<evidence type="ECO:0000255" key="1">
    <source>
        <dbReference type="HAMAP-Rule" id="MF_00175"/>
    </source>
</evidence>
<evidence type="ECO:0000255" key="2">
    <source>
        <dbReference type="PROSITE-ProRule" id="PRU01250"/>
    </source>
</evidence>
<proteinExistence type="inferred from homology"/>
<feature type="chain" id="PRO_0000160302" description="ATP-dependent Clp protease ATP-binding subunit ClpX">
    <location>
        <begin position="1"/>
        <end position="422"/>
    </location>
</feature>
<feature type="domain" description="ClpX-type ZB" evidence="2">
    <location>
        <begin position="3"/>
        <end position="56"/>
    </location>
</feature>
<feature type="binding site" evidence="2">
    <location>
        <position position="15"/>
    </location>
    <ligand>
        <name>Zn(2+)</name>
        <dbReference type="ChEBI" id="CHEBI:29105"/>
    </ligand>
</feature>
<feature type="binding site" evidence="2">
    <location>
        <position position="18"/>
    </location>
    <ligand>
        <name>Zn(2+)</name>
        <dbReference type="ChEBI" id="CHEBI:29105"/>
    </ligand>
</feature>
<feature type="binding site" evidence="2">
    <location>
        <position position="37"/>
    </location>
    <ligand>
        <name>Zn(2+)</name>
        <dbReference type="ChEBI" id="CHEBI:29105"/>
    </ligand>
</feature>
<feature type="binding site" evidence="2">
    <location>
        <position position="40"/>
    </location>
    <ligand>
        <name>Zn(2+)</name>
        <dbReference type="ChEBI" id="CHEBI:29105"/>
    </ligand>
</feature>
<feature type="binding site" evidence="1">
    <location>
        <begin position="119"/>
        <end position="126"/>
    </location>
    <ligand>
        <name>ATP</name>
        <dbReference type="ChEBI" id="CHEBI:30616"/>
    </ligand>
</feature>
<protein>
    <recommendedName>
        <fullName evidence="1">ATP-dependent Clp protease ATP-binding subunit ClpX</fullName>
    </recommendedName>
</protein>
<keyword id="KW-0067">ATP-binding</keyword>
<keyword id="KW-0143">Chaperone</keyword>
<keyword id="KW-0479">Metal-binding</keyword>
<keyword id="KW-0547">Nucleotide-binding</keyword>
<keyword id="KW-0862">Zinc</keyword>
<accession>P70730</accession>
<accession>Q9S6M0</accession>
<name>CLPX_AZOBR</name>
<reference key="1">
    <citation type="submission" date="1999-05" db="EMBL/GenBank/DDBJ databases">
        <title>Azospirillum brasilense tig-clp-clpx-lon.</title>
        <authorList>
            <person name="Indorato C."/>
            <person name="Giannelli L."/>
            <person name="Bazzicalupo M."/>
        </authorList>
    </citation>
    <scope>NUCLEOTIDE SEQUENCE [GENOMIC DNA]</scope>
    <source>
        <strain>SpF94</strain>
    </source>
</reference>
<reference key="2">
    <citation type="journal article" date="1996" name="J. Bacteriol.">
        <title>Cloning, nucleotide sequencing, and expression of the Azospirillum brasilense lon gene: involvement in iron uptake.</title>
        <authorList>
            <person name="Mori E."/>
            <person name="Fulchieri M."/>
            <person name="Indorato C."/>
            <person name="Fani R."/>
            <person name="Bazzicalupo M."/>
        </authorList>
    </citation>
    <scope>NUCLEOTIDE SEQUENCE [GENOMIC DNA] OF 237-422</scope>
    <source>
        <strain>SpF94</strain>
    </source>
</reference>
<dbReference type="EMBL" id="AF150957">
    <property type="protein sequence ID" value="AAD37436.1"/>
    <property type="molecule type" value="Genomic_DNA"/>
</dbReference>
<dbReference type="EMBL" id="U35611">
    <property type="protein sequence ID" value="AAB16818.1"/>
    <property type="molecule type" value="Genomic_DNA"/>
</dbReference>
<dbReference type="PIR" id="PC6018">
    <property type="entry name" value="PC6018"/>
</dbReference>
<dbReference type="SMR" id="P70730"/>
<dbReference type="GO" id="GO:0009376">
    <property type="term" value="C:HslUV protease complex"/>
    <property type="evidence" value="ECO:0007669"/>
    <property type="project" value="TreeGrafter"/>
</dbReference>
<dbReference type="GO" id="GO:0005524">
    <property type="term" value="F:ATP binding"/>
    <property type="evidence" value="ECO:0007669"/>
    <property type="project" value="UniProtKB-UniRule"/>
</dbReference>
<dbReference type="GO" id="GO:0016887">
    <property type="term" value="F:ATP hydrolysis activity"/>
    <property type="evidence" value="ECO:0007669"/>
    <property type="project" value="InterPro"/>
</dbReference>
<dbReference type="GO" id="GO:0140662">
    <property type="term" value="F:ATP-dependent protein folding chaperone"/>
    <property type="evidence" value="ECO:0007669"/>
    <property type="project" value="InterPro"/>
</dbReference>
<dbReference type="GO" id="GO:0046983">
    <property type="term" value="F:protein dimerization activity"/>
    <property type="evidence" value="ECO:0007669"/>
    <property type="project" value="InterPro"/>
</dbReference>
<dbReference type="GO" id="GO:0051082">
    <property type="term" value="F:unfolded protein binding"/>
    <property type="evidence" value="ECO:0007669"/>
    <property type="project" value="UniProtKB-UniRule"/>
</dbReference>
<dbReference type="GO" id="GO:0008270">
    <property type="term" value="F:zinc ion binding"/>
    <property type="evidence" value="ECO:0007669"/>
    <property type="project" value="InterPro"/>
</dbReference>
<dbReference type="GO" id="GO:0051301">
    <property type="term" value="P:cell division"/>
    <property type="evidence" value="ECO:0007669"/>
    <property type="project" value="TreeGrafter"/>
</dbReference>
<dbReference type="GO" id="GO:0051603">
    <property type="term" value="P:proteolysis involved in protein catabolic process"/>
    <property type="evidence" value="ECO:0007669"/>
    <property type="project" value="TreeGrafter"/>
</dbReference>
<dbReference type="CDD" id="cd19497">
    <property type="entry name" value="RecA-like_ClpX"/>
    <property type="match status" value="1"/>
</dbReference>
<dbReference type="FunFam" id="1.10.8.60:FF:000002">
    <property type="entry name" value="ATP-dependent Clp protease ATP-binding subunit ClpX"/>
    <property type="match status" value="1"/>
</dbReference>
<dbReference type="FunFam" id="3.40.50.300:FF:000005">
    <property type="entry name" value="ATP-dependent Clp protease ATP-binding subunit ClpX"/>
    <property type="match status" value="1"/>
</dbReference>
<dbReference type="Gene3D" id="1.10.8.60">
    <property type="match status" value="1"/>
</dbReference>
<dbReference type="Gene3D" id="6.20.220.10">
    <property type="entry name" value="ClpX chaperone, C4-type zinc finger domain"/>
    <property type="match status" value="1"/>
</dbReference>
<dbReference type="Gene3D" id="3.40.50.300">
    <property type="entry name" value="P-loop containing nucleotide triphosphate hydrolases"/>
    <property type="match status" value="1"/>
</dbReference>
<dbReference type="HAMAP" id="MF_00175">
    <property type="entry name" value="ClpX"/>
    <property type="match status" value="1"/>
</dbReference>
<dbReference type="InterPro" id="IPR003593">
    <property type="entry name" value="AAA+_ATPase"/>
</dbReference>
<dbReference type="InterPro" id="IPR050052">
    <property type="entry name" value="ATP-dep_Clp_protease_ClpX"/>
</dbReference>
<dbReference type="InterPro" id="IPR003959">
    <property type="entry name" value="ATPase_AAA_core"/>
</dbReference>
<dbReference type="InterPro" id="IPR019489">
    <property type="entry name" value="Clp_ATPase_C"/>
</dbReference>
<dbReference type="InterPro" id="IPR004487">
    <property type="entry name" value="Clp_protease_ATP-bd_su_ClpX"/>
</dbReference>
<dbReference type="InterPro" id="IPR046425">
    <property type="entry name" value="ClpX_bact"/>
</dbReference>
<dbReference type="InterPro" id="IPR027417">
    <property type="entry name" value="P-loop_NTPase"/>
</dbReference>
<dbReference type="InterPro" id="IPR010603">
    <property type="entry name" value="Znf_CppX_C4"/>
</dbReference>
<dbReference type="InterPro" id="IPR038366">
    <property type="entry name" value="Znf_CppX_C4_sf"/>
</dbReference>
<dbReference type="NCBIfam" id="TIGR00382">
    <property type="entry name" value="clpX"/>
    <property type="match status" value="1"/>
</dbReference>
<dbReference type="NCBIfam" id="NF003745">
    <property type="entry name" value="PRK05342.1"/>
    <property type="match status" value="1"/>
</dbReference>
<dbReference type="PANTHER" id="PTHR48102:SF7">
    <property type="entry name" value="ATP-DEPENDENT CLP PROTEASE ATP-BINDING SUBUNIT CLPX-LIKE, MITOCHONDRIAL"/>
    <property type="match status" value="1"/>
</dbReference>
<dbReference type="PANTHER" id="PTHR48102">
    <property type="entry name" value="ATP-DEPENDENT CLP PROTEASE ATP-BINDING SUBUNIT CLPX-LIKE, MITOCHONDRIAL-RELATED"/>
    <property type="match status" value="1"/>
</dbReference>
<dbReference type="Pfam" id="PF07724">
    <property type="entry name" value="AAA_2"/>
    <property type="match status" value="1"/>
</dbReference>
<dbReference type="Pfam" id="PF10431">
    <property type="entry name" value="ClpB_D2-small"/>
    <property type="match status" value="1"/>
</dbReference>
<dbReference type="Pfam" id="PF06689">
    <property type="entry name" value="zf-C4_ClpX"/>
    <property type="match status" value="1"/>
</dbReference>
<dbReference type="SMART" id="SM00382">
    <property type="entry name" value="AAA"/>
    <property type="match status" value="1"/>
</dbReference>
<dbReference type="SMART" id="SM01086">
    <property type="entry name" value="ClpB_D2-small"/>
    <property type="match status" value="1"/>
</dbReference>
<dbReference type="SMART" id="SM00994">
    <property type="entry name" value="zf-C4_ClpX"/>
    <property type="match status" value="1"/>
</dbReference>
<dbReference type="SUPFAM" id="SSF57716">
    <property type="entry name" value="Glucocorticoid receptor-like (DNA-binding domain)"/>
    <property type="match status" value="1"/>
</dbReference>
<dbReference type="SUPFAM" id="SSF52540">
    <property type="entry name" value="P-loop containing nucleoside triphosphate hydrolases"/>
    <property type="match status" value="1"/>
</dbReference>
<dbReference type="PROSITE" id="PS51902">
    <property type="entry name" value="CLPX_ZB"/>
    <property type="match status" value="1"/>
</dbReference>
<gene>
    <name evidence="1" type="primary">clpX</name>
</gene>